<sequence length="362" mass="38425">LILFFCLAQLWGCRAVPHGPILGYREPACDDVETEQAALAAVDYINKHLPRGYKHTLNQVDSVKVWPRRPAGEVFDIEIDTLETTCHVLDPTPLANCSVRQLTEHAVEGDCDFHVLKQDGQFSVLFAKCDSSPDSAEDVHKVCPNCPLLAPLNDSRVVHAAESALAAFNAQSNGSYLQLVEISRAQLVPLSASVSVEFAVAVTDCVAKEAYSPTKCNLLVEKQYGFCKGTVTAKVNEEDVAVTCTVFQTQPVVLQPQPAGADAGATPVVDAAATASPLADVPAASLVVGPMVVAVPPGIPPVHRSHYDLRHSFSGVASVESASGEAFHVGKTPKGAQPSIPAADGSVPVVRPCPGRIRHFKI</sequence>
<name>FETUA_PIG</name>
<accession>P29700</accession>
<comment type="subcellular location">
    <subcellularLocation>
        <location>Secreted</location>
    </subcellularLocation>
</comment>
<comment type="tissue specificity">
    <text>Expressed by the liver and secreted in plasma.</text>
</comment>
<comment type="PTM">
    <text evidence="1">Phosphorylated by FAM20C in the extracellular medium.</text>
</comment>
<comment type="similarity">
    <text evidence="5">Belongs to the fetuin family.</text>
</comment>
<proteinExistence type="evidence at protein level"/>
<reference key="1">
    <citation type="journal article" date="1992" name="Eur. J. Biochem.">
        <title>The nucleotide and deduced amino acid structures of sheep and pig fetuin. Common structural features of the mammalian fetuin family.</title>
        <authorList>
            <person name="Brown W.M."/>
            <person name="Christie D.L."/>
            <person name="Saunders N.R."/>
            <person name="Nawratil P."/>
            <person name="Dziegielewska K.D."/>
            <person name="Mueller-Esterl W."/>
        </authorList>
    </citation>
    <scope>NUCLEOTIDE SEQUENCE [MRNA]</scope>
    <scope>PARTIAL PROTEIN SEQUENCE</scope>
    <source>
        <tissue>Liver</tissue>
    </source>
</reference>
<keyword id="KW-0903">Direct protein sequencing</keyword>
<keyword id="KW-1015">Disulfide bond</keyword>
<keyword id="KW-0325">Glycoprotein</keyword>
<keyword id="KW-0597">Phosphoprotein</keyword>
<keyword id="KW-1185">Reference proteome</keyword>
<keyword id="KW-0677">Repeat</keyword>
<keyword id="KW-0964">Secreted</keyword>
<keyword id="KW-0732">Signal</keyword>
<feature type="signal peptide">
    <location>
        <begin position="1" status="less than"/>
        <end position="15"/>
    </location>
</feature>
<feature type="chain" id="PRO_0000008895" description="Alpha-2-HS-glycoprotein">
    <location>
        <begin position="16"/>
        <end position="362"/>
    </location>
</feature>
<feature type="domain" description="Cystatin fetuin-A-type 1" evidence="5">
    <location>
        <begin position="24"/>
        <end position="130"/>
    </location>
</feature>
<feature type="domain" description="Cystatin fetuin-A-type 2" evidence="5">
    <location>
        <begin position="141"/>
        <end position="252"/>
    </location>
</feature>
<feature type="modified residue" description="Phosphoserine" evidence="1">
    <location>
        <position position="131"/>
    </location>
</feature>
<feature type="modified residue" description="Phosphoserine" evidence="1">
    <location>
        <position position="132"/>
    </location>
</feature>
<feature type="modified residue" description="Phosphoserine" evidence="1">
    <location>
        <position position="135"/>
    </location>
</feature>
<feature type="modified residue" description="Phosphoserine" evidence="3">
    <location>
        <position position="314"/>
    </location>
</feature>
<feature type="modified residue" description="Phosphoserine" evidence="1">
    <location>
        <position position="318"/>
    </location>
</feature>
<feature type="modified residue" description="Phosphoserine" evidence="1">
    <location>
        <position position="321"/>
    </location>
</feature>
<feature type="modified residue" description="Phosphoserine" evidence="1">
    <location>
        <position position="323"/>
    </location>
</feature>
<feature type="glycosylation site" description="N-linked (GlcNAc...) asparagine" evidence="4">
    <location>
        <position position="96"/>
    </location>
</feature>
<feature type="glycosylation site" description="N-linked (GlcNAc...) asparagine" evidence="4">
    <location>
        <position position="153"/>
    </location>
</feature>
<feature type="glycosylation site" description="N-linked (GlcNAc...) asparagine" evidence="4">
    <location>
        <position position="173"/>
    </location>
</feature>
<feature type="glycosylation site" description="O-linked (GalNAc...) threonine" evidence="2">
    <location>
        <position position="332"/>
    </location>
</feature>
<feature type="disulfide bond" evidence="5">
    <location>
        <begin position="29"/>
        <end position="353"/>
    </location>
</feature>
<feature type="disulfide bond" evidence="5">
    <location>
        <begin position="86"/>
        <end position="97"/>
    </location>
</feature>
<feature type="disulfide bond" evidence="5">
    <location>
        <begin position="111"/>
        <end position="129"/>
    </location>
</feature>
<feature type="disulfide bond" evidence="5">
    <location>
        <begin position="143"/>
        <end position="146"/>
    </location>
</feature>
<feature type="disulfide bond" evidence="5">
    <location>
        <begin position="205"/>
        <end position="216"/>
    </location>
</feature>
<feature type="disulfide bond" evidence="5">
    <location>
        <begin position="227"/>
        <end position="244"/>
    </location>
</feature>
<feature type="non-terminal residue">
    <location>
        <position position="1"/>
    </location>
</feature>
<organism>
    <name type="scientific">Sus scrofa</name>
    <name type="common">Pig</name>
    <dbReference type="NCBI Taxonomy" id="9823"/>
    <lineage>
        <taxon>Eukaryota</taxon>
        <taxon>Metazoa</taxon>
        <taxon>Chordata</taxon>
        <taxon>Craniata</taxon>
        <taxon>Vertebrata</taxon>
        <taxon>Euteleostomi</taxon>
        <taxon>Mammalia</taxon>
        <taxon>Eutheria</taxon>
        <taxon>Laurasiatheria</taxon>
        <taxon>Artiodactyla</taxon>
        <taxon>Suina</taxon>
        <taxon>Suidae</taxon>
        <taxon>Sus</taxon>
    </lineage>
</organism>
<dbReference type="EMBL" id="X56021">
    <property type="protein sequence ID" value="CAA39498.1"/>
    <property type="molecule type" value="mRNA"/>
</dbReference>
<dbReference type="PIR" id="S22395">
    <property type="entry name" value="S22395"/>
</dbReference>
<dbReference type="SMR" id="P29700"/>
<dbReference type="FunCoup" id="P29700">
    <property type="interactions" value="416"/>
</dbReference>
<dbReference type="STRING" id="9823.ENSSSCP00000054117"/>
<dbReference type="MEROPS" id="I25.020"/>
<dbReference type="MEROPS" id="I25.021"/>
<dbReference type="GlyCosmos" id="P29700">
    <property type="glycosylation" value="4 sites, No reported glycans"/>
</dbReference>
<dbReference type="GlyGen" id="P29700">
    <property type="glycosylation" value="4 sites"/>
</dbReference>
<dbReference type="PaxDb" id="9823-ENSSSCP00000012570"/>
<dbReference type="PeptideAtlas" id="P29700"/>
<dbReference type="eggNOG" id="ENOG502RYRI">
    <property type="taxonomic scope" value="Eukaryota"/>
</dbReference>
<dbReference type="InParanoid" id="P29700"/>
<dbReference type="Proteomes" id="UP000008227">
    <property type="component" value="Unplaced"/>
</dbReference>
<dbReference type="Proteomes" id="UP000314985">
    <property type="component" value="Unplaced"/>
</dbReference>
<dbReference type="Proteomes" id="UP000694570">
    <property type="component" value="Unplaced"/>
</dbReference>
<dbReference type="Proteomes" id="UP000694571">
    <property type="component" value="Unplaced"/>
</dbReference>
<dbReference type="Proteomes" id="UP000694720">
    <property type="component" value="Unplaced"/>
</dbReference>
<dbReference type="Proteomes" id="UP000694722">
    <property type="component" value="Unplaced"/>
</dbReference>
<dbReference type="Proteomes" id="UP000694723">
    <property type="component" value="Unplaced"/>
</dbReference>
<dbReference type="Proteomes" id="UP000694724">
    <property type="component" value="Unplaced"/>
</dbReference>
<dbReference type="Proteomes" id="UP000694725">
    <property type="component" value="Unplaced"/>
</dbReference>
<dbReference type="Proteomes" id="UP000694726">
    <property type="component" value="Unplaced"/>
</dbReference>
<dbReference type="Proteomes" id="UP000694727">
    <property type="component" value="Unplaced"/>
</dbReference>
<dbReference type="Proteomes" id="UP000694728">
    <property type="component" value="Unplaced"/>
</dbReference>
<dbReference type="GO" id="GO:0031012">
    <property type="term" value="C:extracellular matrix"/>
    <property type="evidence" value="ECO:0000318"/>
    <property type="project" value="GO_Central"/>
</dbReference>
<dbReference type="GO" id="GO:0005576">
    <property type="term" value="C:extracellular region"/>
    <property type="evidence" value="ECO:0000318"/>
    <property type="project" value="GO_Central"/>
</dbReference>
<dbReference type="GO" id="GO:0005615">
    <property type="term" value="C:extracellular space"/>
    <property type="evidence" value="ECO:0007669"/>
    <property type="project" value="InterPro"/>
</dbReference>
<dbReference type="GO" id="GO:0004869">
    <property type="term" value="F:cysteine-type endopeptidase inhibitor activity"/>
    <property type="evidence" value="ECO:0007669"/>
    <property type="project" value="InterPro"/>
</dbReference>
<dbReference type="GO" id="GO:0004866">
    <property type="term" value="F:endopeptidase inhibitor activity"/>
    <property type="evidence" value="ECO:0000318"/>
    <property type="project" value="GO_Central"/>
</dbReference>
<dbReference type="GO" id="GO:0006953">
    <property type="term" value="P:acute-phase response"/>
    <property type="evidence" value="ECO:0000250"/>
    <property type="project" value="UniProtKB"/>
</dbReference>
<dbReference type="GO" id="GO:0030502">
    <property type="term" value="P:negative regulation of bone mineralization"/>
    <property type="evidence" value="ECO:0000250"/>
    <property type="project" value="UniProtKB"/>
</dbReference>
<dbReference type="GO" id="GO:0050766">
    <property type="term" value="P:positive regulation of phagocytosis"/>
    <property type="evidence" value="ECO:0000250"/>
    <property type="project" value="UniProtKB"/>
</dbReference>
<dbReference type="GO" id="GO:0050727">
    <property type="term" value="P:regulation of inflammatory response"/>
    <property type="evidence" value="ECO:0000250"/>
    <property type="project" value="UniProtKB"/>
</dbReference>
<dbReference type="CDD" id="cd00042">
    <property type="entry name" value="CY"/>
    <property type="match status" value="2"/>
</dbReference>
<dbReference type="FunFam" id="3.10.450.10:FF:000010">
    <property type="entry name" value="Alpha-2-HS-glycoprotein"/>
    <property type="match status" value="1"/>
</dbReference>
<dbReference type="FunFam" id="3.10.450.10:FF:000009">
    <property type="entry name" value="Alpha-2-HS-glycoprotein 2"/>
    <property type="match status" value="1"/>
</dbReference>
<dbReference type="Gene3D" id="3.10.450.10">
    <property type="match status" value="2"/>
</dbReference>
<dbReference type="InterPro" id="IPR000010">
    <property type="entry name" value="Cystatin_dom"/>
</dbReference>
<dbReference type="InterPro" id="IPR025760">
    <property type="entry name" value="Cystatin_Fetuin_A"/>
</dbReference>
<dbReference type="InterPro" id="IPR046350">
    <property type="entry name" value="Cystatin_sf"/>
</dbReference>
<dbReference type="InterPro" id="IPR050735">
    <property type="entry name" value="Kininogen_Fetuin_HRG"/>
</dbReference>
<dbReference type="InterPro" id="IPR001363">
    <property type="entry name" value="Prot_inh_fetuin_CS"/>
</dbReference>
<dbReference type="PANTHER" id="PTHR13814:SF6">
    <property type="entry name" value="ALPHA-2-HS-GLYCOPROTEIN"/>
    <property type="match status" value="1"/>
</dbReference>
<dbReference type="PANTHER" id="PTHR13814">
    <property type="entry name" value="FETUIN"/>
    <property type="match status" value="1"/>
</dbReference>
<dbReference type="Pfam" id="PF00031">
    <property type="entry name" value="Cystatin"/>
    <property type="match status" value="1"/>
</dbReference>
<dbReference type="SMART" id="SM00043">
    <property type="entry name" value="CY"/>
    <property type="match status" value="2"/>
</dbReference>
<dbReference type="SUPFAM" id="SSF54403">
    <property type="entry name" value="Cystatin/monellin"/>
    <property type="match status" value="2"/>
</dbReference>
<dbReference type="PROSITE" id="PS51529">
    <property type="entry name" value="CYSTATIN_FETUIN_A"/>
    <property type="match status" value="2"/>
</dbReference>
<dbReference type="PROSITE" id="PS01254">
    <property type="entry name" value="FETUIN_1"/>
    <property type="match status" value="1"/>
</dbReference>
<dbReference type="PROSITE" id="PS01255">
    <property type="entry name" value="FETUIN_2"/>
    <property type="match status" value="1"/>
</dbReference>
<evidence type="ECO:0000250" key="1">
    <source>
        <dbReference type="UniProtKB" id="P02765"/>
    </source>
</evidence>
<evidence type="ECO:0000250" key="2">
    <source>
        <dbReference type="UniProtKB" id="P12763"/>
    </source>
</evidence>
<evidence type="ECO:0000250" key="3">
    <source>
        <dbReference type="UniProtKB" id="P24090"/>
    </source>
</evidence>
<evidence type="ECO:0000255" key="4"/>
<evidence type="ECO:0000255" key="5">
    <source>
        <dbReference type="PROSITE-ProRule" id="PRU00861"/>
    </source>
</evidence>
<protein>
    <recommendedName>
        <fullName>Alpha-2-HS-glycoprotein</fullName>
    </recommendedName>
    <alternativeName>
        <fullName>Fetuin-A</fullName>
    </alternativeName>
</protein>
<gene>
    <name type="primary">AHSG</name>
    <name type="synonym">FETUA</name>
</gene>